<proteinExistence type="inferred from homology"/>
<accession>B7GT80</accession>
<accession>E8MNG5</accession>
<keyword id="KW-0067">ATP-binding</keyword>
<keyword id="KW-0418">Kinase</keyword>
<keyword id="KW-0545">Nucleotide biosynthesis</keyword>
<keyword id="KW-0547">Nucleotide-binding</keyword>
<keyword id="KW-0808">Transferase</keyword>
<dbReference type="EC" id="2.7.4.9" evidence="1"/>
<dbReference type="EMBL" id="CP001095">
    <property type="protein sequence ID" value="ACJ51303.1"/>
    <property type="molecule type" value="Genomic_DNA"/>
</dbReference>
<dbReference type="EMBL" id="AP010889">
    <property type="protein sequence ID" value="BAJ67771.1"/>
    <property type="molecule type" value="Genomic_DNA"/>
</dbReference>
<dbReference type="RefSeq" id="WP_012576624.1">
    <property type="nucleotide sequence ID" value="NC_011593.1"/>
</dbReference>
<dbReference type="SMR" id="B7GT80"/>
<dbReference type="KEGG" id="bln:Blon_0174"/>
<dbReference type="KEGG" id="blon:BLIJ_0177"/>
<dbReference type="PATRIC" id="fig|391904.8.peg.179"/>
<dbReference type="HOGENOM" id="CLU_049131_0_0_11"/>
<dbReference type="Proteomes" id="UP000001360">
    <property type="component" value="Chromosome"/>
</dbReference>
<dbReference type="GO" id="GO:0005829">
    <property type="term" value="C:cytosol"/>
    <property type="evidence" value="ECO:0007669"/>
    <property type="project" value="TreeGrafter"/>
</dbReference>
<dbReference type="GO" id="GO:0005524">
    <property type="term" value="F:ATP binding"/>
    <property type="evidence" value="ECO:0007669"/>
    <property type="project" value="UniProtKB-UniRule"/>
</dbReference>
<dbReference type="GO" id="GO:0004798">
    <property type="term" value="F:dTMP kinase activity"/>
    <property type="evidence" value="ECO:0007669"/>
    <property type="project" value="UniProtKB-UniRule"/>
</dbReference>
<dbReference type="GO" id="GO:0006233">
    <property type="term" value="P:dTDP biosynthetic process"/>
    <property type="evidence" value="ECO:0007669"/>
    <property type="project" value="InterPro"/>
</dbReference>
<dbReference type="GO" id="GO:0006235">
    <property type="term" value="P:dTTP biosynthetic process"/>
    <property type="evidence" value="ECO:0007669"/>
    <property type="project" value="UniProtKB-UniRule"/>
</dbReference>
<dbReference type="GO" id="GO:0006227">
    <property type="term" value="P:dUDP biosynthetic process"/>
    <property type="evidence" value="ECO:0007669"/>
    <property type="project" value="TreeGrafter"/>
</dbReference>
<dbReference type="CDD" id="cd01672">
    <property type="entry name" value="TMPK"/>
    <property type="match status" value="1"/>
</dbReference>
<dbReference type="FunFam" id="3.40.50.300:FF:000225">
    <property type="entry name" value="Thymidylate kinase"/>
    <property type="match status" value="1"/>
</dbReference>
<dbReference type="Gene3D" id="3.40.50.300">
    <property type="entry name" value="P-loop containing nucleotide triphosphate hydrolases"/>
    <property type="match status" value="1"/>
</dbReference>
<dbReference type="HAMAP" id="MF_00165">
    <property type="entry name" value="Thymidylate_kinase"/>
    <property type="match status" value="1"/>
</dbReference>
<dbReference type="InterPro" id="IPR027417">
    <property type="entry name" value="P-loop_NTPase"/>
</dbReference>
<dbReference type="InterPro" id="IPR039430">
    <property type="entry name" value="Thymidylate_kin-like_dom"/>
</dbReference>
<dbReference type="InterPro" id="IPR018095">
    <property type="entry name" value="Thymidylate_kin_CS"/>
</dbReference>
<dbReference type="InterPro" id="IPR018094">
    <property type="entry name" value="Thymidylate_kinase"/>
</dbReference>
<dbReference type="NCBIfam" id="TIGR00041">
    <property type="entry name" value="DTMP_kinase"/>
    <property type="match status" value="1"/>
</dbReference>
<dbReference type="PANTHER" id="PTHR10344">
    <property type="entry name" value="THYMIDYLATE KINASE"/>
    <property type="match status" value="1"/>
</dbReference>
<dbReference type="PANTHER" id="PTHR10344:SF4">
    <property type="entry name" value="UMP-CMP KINASE 2, MITOCHONDRIAL"/>
    <property type="match status" value="1"/>
</dbReference>
<dbReference type="Pfam" id="PF02223">
    <property type="entry name" value="Thymidylate_kin"/>
    <property type="match status" value="1"/>
</dbReference>
<dbReference type="SUPFAM" id="SSF52540">
    <property type="entry name" value="P-loop containing nucleoside triphosphate hydrolases"/>
    <property type="match status" value="1"/>
</dbReference>
<dbReference type="PROSITE" id="PS01331">
    <property type="entry name" value="THYMIDYLATE_KINASE"/>
    <property type="match status" value="1"/>
</dbReference>
<feature type="chain" id="PRO_1000123559" description="Thymidylate kinase">
    <location>
        <begin position="1"/>
        <end position="233"/>
    </location>
</feature>
<feature type="binding site" evidence="1">
    <location>
        <begin position="10"/>
        <end position="17"/>
    </location>
    <ligand>
        <name>ATP</name>
        <dbReference type="ChEBI" id="CHEBI:30616"/>
    </ligand>
</feature>
<reference key="1">
    <citation type="journal article" date="2008" name="Proc. Natl. Acad. Sci. U.S.A.">
        <title>The genome sequence of Bifidobacterium longum subsp. infantis reveals adaptations for milk utilization within the infant microbiome.</title>
        <authorList>
            <person name="Sela D.A."/>
            <person name="Chapman J."/>
            <person name="Adeuya A."/>
            <person name="Kim J.H."/>
            <person name="Chen F."/>
            <person name="Whitehead T.R."/>
            <person name="Lapidus A."/>
            <person name="Rokhsar D.S."/>
            <person name="Lebrilla C.B."/>
            <person name="German J.B."/>
            <person name="Price N.P."/>
            <person name="Richardson P.M."/>
            <person name="Mills D.A."/>
        </authorList>
    </citation>
    <scope>NUCLEOTIDE SEQUENCE [LARGE SCALE GENOMIC DNA]</scope>
    <source>
        <strain>ATCC 15697 / DSM 20088 / JCM 1222 / NCTC 11817 / S12</strain>
    </source>
</reference>
<reference key="2">
    <citation type="journal article" date="2011" name="Nature">
        <title>Bifidobacteria can protect from enteropathogenic infection through production of acetate.</title>
        <authorList>
            <person name="Fukuda S."/>
            <person name="Toh H."/>
            <person name="Hase K."/>
            <person name="Oshima K."/>
            <person name="Nakanishi Y."/>
            <person name="Yoshimura K."/>
            <person name="Tobe T."/>
            <person name="Clarke J.M."/>
            <person name="Topping D.L."/>
            <person name="Suzuki T."/>
            <person name="Taylor T.D."/>
            <person name="Itoh K."/>
            <person name="Kikuchi J."/>
            <person name="Morita H."/>
            <person name="Hattori M."/>
            <person name="Ohno H."/>
        </authorList>
    </citation>
    <scope>NUCLEOTIDE SEQUENCE [LARGE SCALE GENOMIC DNA]</scope>
    <source>
        <strain>ATCC 15697 / DSM 20088 / JCM 1222 / NCTC 11817 / S12</strain>
    </source>
</reference>
<comment type="function">
    <text evidence="1">Phosphorylation of dTMP to form dTDP in both de novo and salvage pathways of dTTP synthesis.</text>
</comment>
<comment type="catalytic activity">
    <reaction evidence="1">
        <text>dTMP + ATP = dTDP + ADP</text>
        <dbReference type="Rhea" id="RHEA:13517"/>
        <dbReference type="ChEBI" id="CHEBI:30616"/>
        <dbReference type="ChEBI" id="CHEBI:58369"/>
        <dbReference type="ChEBI" id="CHEBI:63528"/>
        <dbReference type="ChEBI" id="CHEBI:456216"/>
        <dbReference type="EC" id="2.7.4.9"/>
    </reaction>
</comment>
<comment type="similarity">
    <text evidence="1">Belongs to the thymidylate kinase family.</text>
</comment>
<evidence type="ECO:0000255" key="1">
    <source>
        <dbReference type="HAMAP-Rule" id="MF_00165"/>
    </source>
</evidence>
<protein>
    <recommendedName>
        <fullName evidence="1">Thymidylate kinase</fullName>
        <ecNumber evidence="1">2.7.4.9</ecNumber>
    </recommendedName>
    <alternativeName>
        <fullName evidence="1">dTMP kinase</fullName>
    </alternativeName>
</protein>
<organism>
    <name type="scientific">Bifidobacterium longum subsp. infantis (strain ATCC 15697 / DSM 20088 / JCM 1222 / NCTC 11817 / S12)</name>
    <dbReference type="NCBI Taxonomy" id="391904"/>
    <lineage>
        <taxon>Bacteria</taxon>
        <taxon>Bacillati</taxon>
        <taxon>Actinomycetota</taxon>
        <taxon>Actinomycetes</taxon>
        <taxon>Bifidobacteriales</taxon>
        <taxon>Bifidobacteriaceae</taxon>
        <taxon>Bifidobacterium</taxon>
    </lineage>
</organism>
<gene>
    <name evidence="1" type="primary">tmk</name>
    <name type="ordered locus">Blon_0174</name>
    <name type="ordered locus">BLIJ_0177</name>
</gene>
<sequence length="233" mass="25303">MSGLFVSFEGVDGVGKTTQVERLRAYLEAQGRTVVVTREPGGTVLGKAIRQLLLHGVDGGAVDIAPRAEALLFAADRAQHVAETIRPALERGEVVITDRYLDSSLAYQAGGRELTPEEIRSLSMWATNNLLPDRTYLLDMDPALSHNRLEHAEDRMESAGSDFQSRTRQAFLDLAAAEPNRFHVIDASQSIEQVWSAIEADIQTLLRDNVADVDTVMARSGASTGAVTMGGVR</sequence>
<name>KTHY_BIFLS</name>